<feature type="chain" id="PRO_0000239443" description="Nucleolar protein 8">
    <location>
        <begin position="1"/>
        <end position="1167"/>
    </location>
</feature>
<feature type="domain" description="RRM" evidence="3">
    <location>
        <begin position="8"/>
        <end position="89"/>
    </location>
</feature>
<feature type="region of interest" description="Disordered" evidence="4">
    <location>
        <begin position="223"/>
        <end position="304"/>
    </location>
</feature>
<feature type="region of interest" description="Disordered" evidence="4">
    <location>
        <begin position="435"/>
        <end position="470"/>
    </location>
</feature>
<feature type="region of interest" description="Disordered" evidence="4">
    <location>
        <begin position="499"/>
        <end position="533"/>
    </location>
</feature>
<feature type="region of interest" description="Disordered" evidence="4">
    <location>
        <begin position="590"/>
        <end position="908"/>
    </location>
</feature>
<feature type="region of interest" description="Disordered" evidence="4">
    <location>
        <begin position="932"/>
        <end position="982"/>
    </location>
</feature>
<feature type="region of interest" description="Disordered" evidence="4">
    <location>
        <begin position="1006"/>
        <end position="1026"/>
    </location>
</feature>
<feature type="region of interest" description="Disordered" evidence="4">
    <location>
        <begin position="1071"/>
        <end position="1105"/>
    </location>
</feature>
<feature type="region of interest" description="Disordered" evidence="4">
    <location>
        <begin position="1145"/>
        <end position="1167"/>
    </location>
</feature>
<feature type="coiled-coil region" evidence="2">
    <location>
        <begin position="753"/>
        <end position="779"/>
    </location>
</feature>
<feature type="coiled-coil region" evidence="2">
    <location>
        <begin position="886"/>
        <end position="924"/>
    </location>
</feature>
<feature type="compositionally biased region" description="Polar residues" evidence="4">
    <location>
        <begin position="248"/>
        <end position="275"/>
    </location>
</feature>
<feature type="compositionally biased region" description="Acidic residues" evidence="4">
    <location>
        <begin position="457"/>
        <end position="470"/>
    </location>
</feature>
<feature type="compositionally biased region" description="Basic and acidic residues" evidence="4">
    <location>
        <begin position="501"/>
        <end position="510"/>
    </location>
</feature>
<feature type="compositionally biased region" description="Polar residues" evidence="4">
    <location>
        <begin position="640"/>
        <end position="652"/>
    </location>
</feature>
<feature type="compositionally biased region" description="Basic and acidic residues" evidence="4">
    <location>
        <begin position="653"/>
        <end position="668"/>
    </location>
</feature>
<feature type="compositionally biased region" description="Basic and acidic residues" evidence="4">
    <location>
        <begin position="727"/>
        <end position="736"/>
    </location>
</feature>
<feature type="compositionally biased region" description="Polar residues" evidence="4">
    <location>
        <begin position="738"/>
        <end position="748"/>
    </location>
</feature>
<feature type="compositionally biased region" description="Basic and acidic residues" evidence="4">
    <location>
        <begin position="749"/>
        <end position="776"/>
    </location>
</feature>
<feature type="compositionally biased region" description="Basic and acidic residues" evidence="4">
    <location>
        <begin position="817"/>
        <end position="827"/>
    </location>
</feature>
<feature type="compositionally biased region" description="Acidic residues" evidence="4">
    <location>
        <begin position="837"/>
        <end position="847"/>
    </location>
</feature>
<feature type="compositionally biased region" description="Basic and acidic residues" evidence="4">
    <location>
        <begin position="874"/>
        <end position="887"/>
    </location>
</feature>
<feature type="compositionally biased region" description="Basic and acidic residues" evidence="4">
    <location>
        <begin position="940"/>
        <end position="968"/>
    </location>
</feature>
<feature type="compositionally biased region" description="Basic and acidic residues" evidence="4">
    <location>
        <begin position="1007"/>
        <end position="1026"/>
    </location>
</feature>
<feature type="compositionally biased region" description="Basic residues" evidence="4">
    <location>
        <begin position="1153"/>
        <end position="1167"/>
    </location>
</feature>
<feature type="modified residue" description="Phosphoserine" evidence="24">
    <location>
        <position position="268"/>
    </location>
</feature>
<feature type="modified residue" description="Phosphoserine" evidence="21 23">
    <location>
        <position position="298"/>
    </location>
</feature>
<feature type="modified residue" description="Phosphothreonine" evidence="21 23">
    <location>
        <position position="302"/>
    </location>
</feature>
<feature type="modified residue" description="Phosphoserine" evidence="21 23">
    <location>
        <position position="304"/>
    </location>
</feature>
<feature type="modified residue" description="Phosphoserine" evidence="24">
    <location>
        <position position="331"/>
    </location>
</feature>
<feature type="modified residue" description="Phosphoserine" evidence="19 20 22 23 24">
    <location>
        <position position="365"/>
    </location>
</feature>
<feature type="modified residue" description="Phosphotyrosine" evidence="23">
    <location>
        <position position="376"/>
    </location>
</feature>
<feature type="modified residue" description="Phosphoserine" evidence="20 21 23 24">
    <location>
        <position position="378"/>
    </location>
</feature>
<feature type="modified residue" description="Phosphothreonine" evidence="20 21 23 24">
    <location>
        <position position="381"/>
    </location>
</feature>
<feature type="modified residue" description="Phosphoserine" evidence="24">
    <location>
        <position position="432"/>
    </location>
</feature>
<feature type="modified residue" description="Phosphoserine" evidence="24">
    <location>
        <position position="723"/>
    </location>
</feature>
<feature type="modified residue" description="Phosphothreonine" evidence="1">
    <location>
        <position position="795"/>
    </location>
</feature>
<feature type="modified residue" description="Phosphoserine" evidence="1">
    <location>
        <position position="801"/>
    </location>
</feature>
<feature type="modified residue" description="Phosphoserine" evidence="20 21 25">
    <location>
        <position position="837"/>
    </location>
</feature>
<feature type="modified residue" description="Phosphoserine" evidence="20 25">
    <location>
        <position position="838"/>
    </location>
</feature>
<feature type="modified residue" description="Phosphoserine" evidence="20 25">
    <location>
        <position position="843"/>
    </location>
</feature>
<feature type="modified residue" description="Phosphoserine" evidence="20 25">
    <location>
        <position position="845"/>
    </location>
</feature>
<feature type="modified residue" description="Phosphothreonine" evidence="19 21 22 23 24">
    <location>
        <position position="888"/>
    </location>
</feature>
<feature type="modified residue" description="Phosphoserine" evidence="19 22 23 24">
    <location>
        <position position="890"/>
    </location>
</feature>
<feature type="modified residue" description="Phosphoserine" evidence="20">
    <location>
        <position position="1036"/>
    </location>
</feature>
<feature type="modified residue" description="Phosphoserine" evidence="20 21 23">
    <location>
        <position position="1082"/>
    </location>
</feature>
<feature type="modified residue" description="Phosphoserine" evidence="20 21 23">
    <location>
        <position position="1083"/>
    </location>
</feature>
<feature type="modified residue" description="Phosphoserine" evidence="20 21 23">
    <location>
        <position position="1084"/>
    </location>
</feature>
<feature type="modified residue" description="Phosphoserine" evidence="20 23 24">
    <location>
        <position position="1099"/>
    </location>
</feature>
<feature type="cross-link" description="Glycyl lysine isopeptide (Lys-Gly) (interchain with G-Cter in SUMO2)" evidence="27">
    <location>
        <position position="225"/>
    </location>
</feature>
<feature type="cross-link" description="Glycyl lysine isopeptide (Lys-Gly) (interchain with G-Cter in SUMO2)" evidence="27">
    <location>
        <position position="314"/>
    </location>
</feature>
<feature type="cross-link" description="Glycyl lysine isopeptide (Lys-Gly) (interchain with G-Cter in SUMO2)" evidence="26 27">
    <location>
        <position position="1057"/>
    </location>
</feature>
<feature type="splice variant" id="VSP_052055" description="In isoform 2." evidence="9">
    <location>
        <begin position="1"/>
        <end position="68"/>
    </location>
</feature>
<feature type="splice variant" id="VSP_052056" description="In isoform 4." evidence="9">
    <location>
        <begin position="787"/>
        <end position="824"/>
    </location>
</feature>
<feature type="sequence variant" id="VAR_061830" description="In dbSNP:rs58545014.">
    <original>G</original>
    <variation>E</variation>
    <location>
        <position position="470"/>
    </location>
</feature>
<feature type="sequence variant" id="VAR_052211" description="In dbSNP:rs2236344.">
    <original>V</original>
    <variation>L</variation>
    <location>
        <position position="748"/>
    </location>
</feature>
<feature type="sequence variant" id="VAR_052212" description="In dbSNP:rs15717.">
    <original>D</original>
    <variation>E</variation>
    <location>
        <position position="841"/>
    </location>
</feature>
<feature type="sequence variant" id="VAR_052213" description="In dbSNP:rs34224798.">
    <original>E</original>
    <variation>D</variation>
    <location>
        <position position="988"/>
    </location>
</feature>
<feature type="sequence variant" id="VAR_052214" description="In dbSNP:rs921122.">
    <original>G</original>
    <variation>S</variation>
    <location>
        <position position="1021"/>
    </location>
</feature>
<feature type="sequence conflict" description="In Ref. 2; BAC99315 and 3; BAA91479." evidence="10" ref="2 3">
    <original>M</original>
    <variation>I</variation>
    <location>
        <position position="69"/>
    </location>
</feature>
<feature type="sequence conflict" description="In Ref. 3; BAB14857." evidence="10" ref="3">
    <original>S</original>
    <variation>G</variation>
    <location>
        <position position="454"/>
    </location>
</feature>
<feature type="sequence conflict" description="In Ref. 3; BAB14857." evidence="10" ref="3">
    <original>K</original>
    <variation>E</variation>
    <location>
        <position position="479"/>
    </location>
</feature>
<feature type="sequence conflict" description="In Ref. 2; BAC99315 and 3; BAA91356." evidence="10" ref="2 3">
    <original>C</original>
    <variation>W</variation>
    <location>
        <position position="630"/>
    </location>
</feature>
<feature type="sequence conflict" description="In Ref. 3; BAB14857." evidence="10" ref="3">
    <original>E</original>
    <variation>G</variation>
    <location>
        <position position="733"/>
    </location>
</feature>
<feature type="sequence conflict" description="In Ref. 3; BAB14857." evidence="10" ref="3">
    <original>S</original>
    <variation>G</variation>
    <location>
        <position position="749"/>
    </location>
</feature>
<feature type="sequence conflict" description="In Ref. 2; BAC99315 and 3; BAA91356." evidence="10" ref="2 3">
    <original>I</original>
    <variation>L</variation>
    <location>
        <position position="945"/>
    </location>
</feature>
<feature type="sequence conflict" description="In Ref. 2; BAC99315 and 3; BAA91356." evidence="10" ref="2 3">
    <original>K</original>
    <variation>R</variation>
    <location>
        <position position="966"/>
    </location>
</feature>
<dbReference type="EMBL" id="AB105104">
    <property type="protein sequence ID" value="BAD12268.1"/>
    <property type="molecule type" value="mRNA"/>
</dbReference>
<dbReference type="EMBL" id="AB109030">
    <property type="protein sequence ID" value="BAC99315.1"/>
    <property type="molecule type" value="mRNA"/>
</dbReference>
<dbReference type="EMBL" id="AK000743">
    <property type="protein sequence ID" value="BAA91356.1"/>
    <property type="status" value="ALT_SEQ"/>
    <property type="molecule type" value="mRNA"/>
</dbReference>
<dbReference type="EMBL" id="AK001049">
    <property type="protein sequence ID" value="BAA91479.1"/>
    <property type="molecule type" value="mRNA"/>
</dbReference>
<dbReference type="EMBL" id="AK022755">
    <property type="protein sequence ID" value="BAB14229.1"/>
    <property type="status" value="ALT_INIT"/>
    <property type="molecule type" value="mRNA"/>
</dbReference>
<dbReference type="EMBL" id="AK024245">
    <property type="protein sequence ID" value="BAB14857.1"/>
    <property type="molecule type" value="mRNA"/>
</dbReference>
<dbReference type="EMBL" id="AK024786">
    <property type="protein sequence ID" value="BAB15003.1"/>
    <property type="status" value="ALT_INIT"/>
    <property type="molecule type" value="mRNA"/>
</dbReference>
<dbReference type="EMBL" id="AL136097">
    <property type="status" value="NOT_ANNOTATED_CDS"/>
    <property type="molecule type" value="Genomic_DNA"/>
</dbReference>
<dbReference type="EMBL" id="BC013788">
    <property type="protein sequence ID" value="AAH13788.2"/>
    <property type="molecule type" value="mRNA"/>
</dbReference>
<dbReference type="CCDS" id="CCDS47993.1">
    <molecule id="Q76FK4-1"/>
</dbReference>
<dbReference type="CCDS" id="CCDS59135.1">
    <molecule id="Q76FK4-2"/>
</dbReference>
<dbReference type="CCDS" id="CCDS83384.1">
    <molecule id="Q76FK4-4"/>
</dbReference>
<dbReference type="RefSeq" id="NP_001243323.1">
    <molecule id="Q76FK4-2"/>
    <property type="nucleotide sequence ID" value="NM_001256394.2"/>
</dbReference>
<dbReference type="RefSeq" id="NP_001317651.1">
    <molecule id="Q76FK4-4"/>
    <property type="nucleotide sequence ID" value="NM_001330722.2"/>
</dbReference>
<dbReference type="RefSeq" id="NP_060418.4">
    <molecule id="Q76FK4-1"/>
    <property type="nucleotide sequence ID" value="NM_017948.5"/>
</dbReference>
<dbReference type="RefSeq" id="XP_006717229.1">
    <molecule id="Q76FK4-1"/>
    <property type="nucleotide sequence ID" value="XM_006717166.5"/>
</dbReference>
<dbReference type="RefSeq" id="XP_006717230.1">
    <molecule id="Q76FK4-1"/>
    <property type="nucleotide sequence ID" value="XM_006717167.4"/>
</dbReference>
<dbReference type="RefSeq" id="XP_006717232.1">
    <property type="nucleotide sequence ID" value="XM_006717169.3"/>
</dbReference>
<dbReference type="RefSeq" id="XP_006717233.1">
    <property type="nucleotide sequence ID" value="XM_006717170.3"/>
</dbReference>
<dbReference type="RefSeq" id="XP_011517126.1">
    <molecule id="Q76FK4-2"/>
    <property type="nucleotide sequence ID" value="XM_011518824.4"/>
</dbReference>
<dbReference type="RefSeq" id="XP_016870365.1">
    <property type="nucleotide sequence ID" value="XM_017014876.1"/>
</dbReference>
<dbReference type="RefSeq" id="XP_024303362.1">
    <molecule id="Q76FK4-2"/>
    <property type="nucleotide sequence ID" value="XM_024447594.2"/>
</dbReference>
<dbReference type="RefSeq" id="XP_054189069.1">
    <molecule id="Q76FK4-1"/>
    <property type="nucleotide sequence ID" value="XM_054333094.1"/>
</dbReference>
<dbReference type="RefSeq" id="XP_054189070.1">
    <molecule id="Q76FK4-1"/>
    <property type="nucleotide sequence ID" value="XM_054333095.1"/>
</dbReference>
<dbReference type="RefSeq" id="XP_054189071.1">
    <molecule id="Q76FK4-2"/>
    <property type="nucleotide sequence ID" value="XM_054333096.1"/>
</dbReference>
<dbReference type="RefSeq" id="XP_054189072.1">
    <molecule id="Q76FK4-2"/>
    <property type="nucleotide sequence ID" value="XM_054333097.1"/>
</dbReference>
<dbReference type="RefSeq" id="XP_054219179.1">
    <molecule id="Q76FK4-1"/>
    <property type="nucleotide sequence ID" value="XM_054363204.1"/>
</dbReference>
<dbReference type="RefSeq" id="XP_054219180.1">
    <molecule id="Q76FK4-1"/>
    <property type="nucleotide sequence ID" value="XM_054363205.1"/>
</dbReference>
<dbReference type="RefSeq" id="XP_054219181.1">
    <molecule id="Q76FK4-2"/>
    <property type="nucleotide sequence ID" value="XM_054363206.1"/>
</dbReference>
<dbReference type="RefSeq" id="XP_054219182.1">
    <molecule id="Q76FK4-2"/>
    <property type="nucleotide sequence ID" value="XM_054363207.1"/>
</dbReference>
<dbReference type="SMR" id="Q76FK4"/>
<dbReference type="BioGRID" id="120364">
    <property type="interactions" value="134"/>
</dbReference>
<dbReference type="FunCoup" id="Q76FK4">
    <property type="interactions" value="2887"/>
</dbReference>
<dbReference type="IntAct" id="Q76FK4">
    <property type="interactions" value="79"/>
</dbReference>
<dbReference type="MINT" id="Q76FK4"/>
<dbReference type="STRING" id="9606.ENSP00000441140"/>
<dbReference type="GlyCosmos" id="Q76FK4">
    <property type="glycosylation" value="1 site, 2 glycans"/>
</dbReference>
<dbReference type="GlyGen" id="Q76FK4">
    <property type="glycosylation" value="2 sites, 1 N-linked glycan (1 site), 2 O-linked glycans (1 site)"/>
</dbReference>
<dbReference type="iPTMnet" id="Q76FK4"/>
<dbReference type="PhosphoSitePlus" id="Q76FK4"/>
<dbReference type="BioMuta" id="NOL8"/>
<dbReference type="DMDM" id="74758950"/>
<dbReference type="jPOST" id="Q76FK4"/>
<dbReference type="MassIVE" id="Q76FK4"/>
<dbReference type="PaxDb" id="9606-ENSP00000441140"/>
<dbReference type="PeptideAtlas" id="Q76FK4"/>
<dbReference type="ProteomicsDB" id="68665">
    <molecule id="Q76FK4-1"/>
</dbReference>
<dbReference type="ProteomicsDB" id="68666">
    <molecule id="Q76FK4-2"/>
</dbReference>
<dbReference type="ProteomicsDB" id="68668">
    <molecule id="Q76FK4-4"/>
</dbReference>
<dbReference type="Pumba" id="Q76FK4"/>
<dbReference type="Antibodypedia" id="43737">
    <property type="antibodies" value="118 antibodies from 22 providers"/>
</dbReference>
<dbReference type="DNASU" id="55035"/>
<dbReference type="Ensembl" id="ENST00000358855.8">
    <molecule id="Q76FK4-2"/>
    <property type="protein sequence ID" value="ENSP00000351723.4"/>
    <property type="gene ID" value="ENSG00000198000.12"/>
</dbReference>
<dbReference type="Ensembl" id="ENST00000442668.7">
    <molecule id="Q76FK4-1"/>
    <property type="protein sequence ID" value="ENSP00000401177.2"/>
    <property type="gene ID" value="ENSG00000198000.12"/>
</dbReference>
<dbReference type="Ensembl" id="ENST00000535387.5">
    <molecule id="Q76FK4-4"/>
    <property type="protein sequence ID" value="ENSP00000441300.1"/>
    <property type="gene ID" value="ENSG00000198000.12"/>
</dbReference>
<dbReference type="Ensembl" id="ENST00000542053.5">
    <molecule id="Q76FK4-2"/>
    <property type="protein sequence ID" value="ENSP00000440709.1"/>
    <property type="gene ID" value="ENSG00000198000.12"/>
</dbReference>
<dbReference type="Ensembl" id="ENST00000545558.5">
    <molecule id="Q76FK4-1"/>
    <property type="protein sequence ID" value="ENSP00000441140.1"/>
    <property type="gene ID" value="ENSG00000198000.12"/>
</dbReference>
<dbReference type="Ensembl" id="ENST00000707203.1">
    <molecule id="Q76FK4-1"/>
    <property type="protein sequence ID" value="ENSP00000516776.1"/>
    <property type="gene ID" value="ENSG00000291347.1"/>
</dbReference>
<dbReference type="Ensembl" id="ENST00000707204.1">
    <molecule id="Q76FK4-2"/>
    <property type="protein sequence ID" value="ENSP00000516777.1"/>
    <property type="gene ID" value="ENSG00000291347.1"/>
</dbReference>
<dbReference type="Ensembl" id="ENST00000707208.1">
    <molecule id="Q76FK4-1"/>
    <property type="protein sequence ID" value="ENSP00000516780.1"/>
    <property type="gene ID" value="ENSG00000291347.1"/>
</dbReference>
<dbReference type="Ensembl" id="ENST00000707211.1">
    <molecule id="Q76FK4-4"/>
    <property type="protein sequence ID" value="ENSP00000516783.1"/>
    <property type="gene ID" value="ENSG00000291347.1"/>
</dbReference>
<dbReference type="Ensembl" id="ENST00000707212.1">
    <molecule id="Q76FK4-2"/>
    <property type="protein sequence ID" value="ENSP00000516784.1"/>
    <property type="gene ID" value="ENSG00000291347.1"/>
</dbReference>
<dbReference type="GeneID" id="55035"/>
<dbReference type="KEGG" id="hsa:55035"/>
<dbReference type="MANE-Select" id="ENST00000442668.7">
    <property type="protein sequence ID" value="ENSP00000401177.2"/>
    <property type="RefSeq nucleotide sequence ID" value="NM_017948.6"/>
    <property type="RefSeq protein sequence ID" value="NP_060418.4"/>
</dbReference>
<dbReference type="UCSC" id="uc064uhl.1">
    <molecule id="Q76FK4-1"/>
    <property type="organism name" value="human"/>
</dbReference>
<dbReference type="AGR" id="HGNC:23387"/>
<dbReference type="CTD" id="55035"/>
<dbReference type="DisGeNET" id="55035"/>
<dbReference type="GeneCards" id="NOL8"/>
<dbReference type="HGNC" id="HGNC:23387">
    <property type="gene designation" value="NOL8"/>
</dbReference>
<dbReference type="HPA" id="ENSG00000198000">
    <property type="expression patterns" value="Low tissue specificity"/>
</dbReference>
<dbReference type="MIM" id="611534">
    <property type="type" value="gene"/>
</dbReference>
<dbReference type="neXtProt" id="NX_Q76FK4"/>
<dbReference type="OpenTargets" id="ENSG00000198000"/>
<dbReference type="PharmGKB" id="PA134918056"/>
<dbReference type="VEuPathDB" id="HostDB:ENSG00000198000"/>
<dbReference type="eggNOG" id="KOG4365">
    <property type="taxonomic scope" value="Eukaryota"/>
</dbReference>
<dbReference type="GeneTree" id="ENSGT00390000004860"/>
<dbReference type="HOGENOM" id="CLU_008415_0_0_1"/>
<dbReference type="InParanoid" id="Q76FK4"/>
<dbReference type="OMA" id="RNIMKYD"/>
<dbReference type="OrthoDB" id="21643at2759"/>
<dbReference type="PAN-GO" id="Q76FK4">
    <property type="GO annotations" value="3 GO annotations based on evolutionary models"/>
</dbReference>
<dbReference type="PhylomeDB" id="Q76FK4"/>
<dbReference type="TreeFam" id="TF323283"/>
<dbReference type="PathwayCommons" id="Q76FK4"/>
<dbReference type="SignaLink" id="Q76FK4"/>
<dbReference type="BioGRID-ORCS" id="55035">
    <property type="hits" value="609 hits in 1162 CRISPR screens"/>
</dbReference>
<dbReference type="CD-CODE" id="91857CE7">
    <property type="entry name" value="Nucleolus"/>
</dbReference>
<dbReference type="ChiTaRS" id="NOL8">
    <property type="organism name" value="human"/>
</dbReference>
<dbReference type="GeneWiki" id="NOL8"/>
<dbReference type="GenomeRNAi" id="55035"/>
<dbReference type="Pharos" id="Q76FK4">
    <property type="development level" value="Tbio"/>
</dbReference>
<dbReference type="PRO" id="PR:Q76FK4"/>
<dbReference type="Proteomes" id="UP000005640">
    <property type="component" value="Chromosome 9"/>
</dbReference>
<dbReference type="RNAct" id="Q76FK4">
    <property type="molecule type" value="protein"/>
</dbReference>
<dbReference type="Bgee" id="ENSG00000198000">
    <property type="expression patterns" value="Expressed in calcaneal tendon and 196 other cell types or tissues"/>
</dbReference>
<dbReference type="ExpressionAtlas" id="Q76FK4">
    <property type="expression patterns" value="baseline and differential"/>
</dbReference>
<dbReference type="GO" id="GO:0005694">
    <property type="term" value="C:chromosome"/>
    <property type="evidence" value="ECO:0000314"/>
    <property type="project" value="HPA"/>
</dbReference>
<dbReference type="GO" id="GO:0005730">
    <property type="term" value="C:nucleolus"/>
    <property type="evidence" value="ECO:0000314"/>
    <property type="project" value="HPA"/>
</dbReference>
<dbReference type="GO" id="GO:0003723">
    <property type="term" value="F:RNA binding"/>
    <property type="evidence" value="ECO:0007005"/>
    <property type="project" value="UniProtKB"/>
</dbReference>
<dbReference type="GO" id="GO:1902570">
    <property type="term" value="P:protein localization to nucleolus"/>
    <property type="evidence" value="ECO:0000315"/>
    <property type="project" value="BHF-UCL"/>
</dbReference>
<dbReference type="GO" id="GO:0006364">
    <property type="term" value="P:rRNA processing"/>
    <property type="evidence" value="ECO:0000315"/>
    <property type="project" value="UniProtKB"/>
</dbReference>
<dbReference type="CDD" id="cd12226">
    <property type="entry name" value="RRM_NOL8"/>
    <property type="match status" value="1"/>
</dbReference>
<dbReference type="FunFam" id="3.30.70.330:FF:000346">
    <property type="entry name" value="Nucleolar protein 8"/>
    <property type="match status" value="1"/>
</dbReference>
<dbReference type="Gene3D" id="3.30.70.330">
    <property type="match status" value="1"/>
</dbReference>
<dbReference type="InterPro" id="IPR034138">
    <property type="entry name" value="NOP8_RRM"/>
</dbReference>
<dbReference type="InterPro" id="IPR012677">
    <property type="entry name" value="Nucleotide-bd_a/b_plait_sf"/>
</dbReference>
<dbReference type="InterPro" id="IPR035979">
    <property type="entry name" value="RBD_domain_sf"/>
</dbReference>
<dbReference type="InterPro" id="IPR000504">
    <property type="entry name" value="RRM_dom"/>
</dbReference>
<dbReference type="PANTHER" id="PTHR48029">
    <property type="entry name" value="NUCLEOLAR PROTEIN 8"/>
    <property type="match status" value="1"/>
</dbReference>
<dbReference type="PANTHER" id="PTHR48029:SF2">
    <property type="entry name" value="NUCLEOLAR PROTEIN 8"/>
    <property type="match status" value="1"/>
</dbReference>
<dbReference type="Pfam" id="PF00076">
    <property type="entry name" value="RRM_1"/>
    <property type="match status" value="1"/>
</dbReference>
<dbReference type="SMART" id="SM00360">
    <property type="entry name" value="RRM"/>
    <property type="match status" value="1"/>
</dbReference>
<dbReference type="SUPFAM" id="SSF54928">
    <property type="entry name" value="RNA-binding domain, RBD"/>
    <property type="match status" value="1"/>
</dbReference>
<dbReference type="PROSITE" id="PS50102">
    <property type="entry name" value="RRM"/>
    <property type="match status" value="1"/>
</dbReference>
<name>NOL8_HUMAN</name>
<reference evidence="10 17" key="1">
    <citation type="journal article" date="2004" name="Cancer Sci.">
        <title>Identification of NOL8, a nucleolar protein containing an RNA recognition motif (RRM), which was overexpressed in diffuse-type gastric cancer.</title>
        <authorList>
            <person name="Jinawath N."/>
            <person name="Furukawa Y."/>
            <person name="Nakamura Y."/>
        </authorList>
    </citation>
    <scope>NUCLEOTIDE SEQUENCE [MRNA] (ISOFORM 1)</scope>
    <scope>FUNCTION</scope>
    <scope>SUBCELLULAR LOCATION</scope>
    <scope>TISSUE SPECIFICITY</scope>
    <scope>INDUCTION</scope>
    <scope>PHOSPHORYLATION</scope>
</reference>
<reference evidence="10 16" key="2">
    <citation type="journal article" date="2004" name="J. Biol. Chem.">
        <title>A novel human nucleolar protein, Nop132, binds to the G proteins, RRAG A/C/D.</title>
        <authorList>
            <person name="Sekiguchi T."/>
            <person name="Todaka Y."/>
            <person name="Wang Y."/>
            <person name="Hirose E."/>
            <person name="Nakashima N."/>
            <person name="Nishimoto T."/>
        </authorList>
    </citation>
    <scope>NUCLEOTIDE SEQUENCE [MRNA] (ISOFORM 1)</scope>
    <scope>PROTEIN SEQUENCE OF 946-964</scope>
    <scope>FUNCTION</scope>
    <scope>INTERACTION WITH NIP7; RRAGA; RRAGC AND RRAGD</scope>
</reference>
<reference evidence="10 14" key="3">
    <citation type="journal article" date="2004" name="Nat. Genet.">
        <title>Complete sequencing and characterization of 21,243 full-length human cDNAs.</title>
        <authorList>
            <person name="Ota T."/>
            <person name="Suzuki Y."/>
            <person name="Nishikawa T."/>
            <person name="Otsuki T."/>
            <person name="Sugiyama T."/>
            <person name="Irie R."/>
            <person name="Wakamatsu A."/>
            <person name="Hayashi K."/>
            <person name="Sato H."/>
            <person name="Nagai K."/>
            <person name="Kimura K."/>
            <person name="Makita H."/>
            <person name="Sekine M."/>
            <person name="Obayashi M."/>
            <person name="Nishi T."/>
            <person name="Shibahara T."/>
            <person name="Tanaka T."/>
            <person name="Ishii S."/>
            <person name="Yamamoto J."/>
            <person name="Saito K."/>
            <person name="Kawai Y."/>
            <person name="Isono Y."/>
            <person name="Nakamura Y."/>
            <person name="Nagahari K."/>
            <person name="Murakami K."/>
            <person name="Yasuda T."/>
            <person name="Iwayanagi T."/>
            <person name="Wagatsuma M."/>
            <person name="Shiratori A."/>
            <person name="Sudo H."/>
            <person name="Hosoiri T."/>
            <person name="Kaku Y."/>
            <person name="Kodaira H."/>
            <person name="Kondo H."/>
            <person name="Sugawara M."/>
            <person name="Takahashi M."/>
            <person name="Kanda K."/>
            <person name="Yokoi T."/>
            <person name="Furuya T."/>
            <person name="Kikkawa E."/>
            <person name="Omura Y."/>
            <person name="Abe K."/>
            <person name="Kamihara K."/>
            <person name="Katsuta N."/>
            <person name="Sato K."/>
            <person name="Tanikawa M."/>
            <person name="Yamazaki M."/>
            <person name="Ninomiya K."/>
            <person name="Ishibashi T."/>
            <person name="Yamashita H."/>
            <person name="Murakawa K."/>
            <person name="Fujimori K."/>
            <person name="Tanai H."/>
            <person name="Kimata M."/>
            <person name="Watanabe M."/>
            <person name="Hiraoka S."/>
            <person name="Chiba Y."/>
            <person name="Ishida S."/>
            <person name="Ono Y."/>
            <person name="Takiguchi S."/>
            <person name="Watanabe S."/>
            <person name="Yosida M."/>
            <person name="Hotuta T."/>
            <person name="Kusano J."/>
            <person name="Kanehori K."/>
            <person name="Takahashi-Fujii A."/>
            <person name="Hara H."/>
            <person name="Tanase T.-O."/>
            <person name="Nomura Y."/>
            <person name="Togiya S."/>
            <person name="Komai F."/>
            <person name="Hara R."/>
            <person name="Takeuchi K."/>
            <person name="Arita M."/>
            <person name="Imose N."/>
            <person name="Musashino K."/>
            <person name="Yuuki H."/>
            <person name="Oshima A."/>
            <person name="Sasaki N."/>
            <person name="Aotsuka S."/>
            <person name="Yoshikawa Y."/>
            <person name="Matsunawa H."/>
            <person name="Ichihara T."/>
            <person name="Shiohata N."/>
            <person name="Sano S."/>
            <person name="Moriya S."/>
            <person name="Momiyama H."/>
            <person name="Satoh N."/>
            <person name="Takami S."/>
            <person name="Terashima Y."/>
            <person name="Suzuki O."/>
            <person name="Nakagawa S."/>
            <person name="Senoh A."/>
            <person name="Mizoguchi H."/>
            <person name="Goto Y."/>
            <person name="Shimizu F."/>
            <person name="Wakebe H."/>
            <person name="Hishigaki H."/>
            <person name="Watanabe T."/>
            <person name="Sugiyama A."/>
            <person name="Takemoto M."/>
            <person name="Kawakami B."/>
            <person name="Yamazaki M."/>
            <person name="Watanabe K."/>
            <person name="Kumagai A."/>
            <person name="Itakura S."/>
            <person name="Fukuzumi Y."/>
            <person name="Fujimori Y."/>
            <person name="Komiyama M."/>
            <person name="Tashiro H."/>
            <person name="Tanigami A."/>
            <person name="Fujiwara T."/>
            <person name="Ono T."/>
            <person name="Yamada K."/>
            <person name="Fujii Y."/>
            <person name="Ozaki K."/>
            <person name="Hirao M."/>
            <person name="Ohmori Y."/>
            <person name="Kawabata A."/>
            <person name="Hikiji T."/>
            <person name="Kobatake N."/>
            <person name="Inagaki H."/>
            <person name="Ikema Y."/>
            <person name="Okamoto S."/>
            <person name="Okitani R."/>
            <person name="Kawakami T."/>
            <person name="Noguchi S."/>
            <person name="Itoh T."/>
            <person name="Shigeta K."/>
            <person name="Senba T."/>
            <person name="Matsumura K."/>
            <person name="Nakajima Y."/>
            <person name="Mizuno T."/>
            <person name="Morinaga M."/>
            <person name="Sasaki M."/>
            <person name="Togashi T."/>
            <person name="Oyama M."/>
            <person name="Hata H."/>
            <person name="Watanabe M."/>
            <person name="Komatsu T."/>
            <person name="Mizushima-Sugano J."/>
            <person name="Satoh T."/>
            <person name="Shirai Y."/>
            <person name="Takahashi Y."/>
            <person name="Nakagawa K."/>
            <person name="Okumura K."/>
            <person name="Nagase T."/>
            <person name="Nomura N."/>
            <person name="Kikuchi H."/>
            <person name="Masuho Y."/>
            <person name="Yamashita R."/>
            <person name="Nakai K."/>
            <person name="Yada T."/>
            <person name="Nakamura Y."/>
            <person name="Ohara O."/>
            <person name="Isogai T."/>
            <person name="Sugano S."/>
        </authorList>
    </citation>
    <scope>NUCLEOTIDE SEQUENCE [LARGE SCALE MRNA] (ISOFORM 1)</scope>
    <source>
        <tissue evidence="13">Embryonic head</tissue>
        <tissue evidence="12">Hepatoma</tissue>
        <tissue evidence="15">Smooth muscle</tissue>
        <tissue evidence="14">Teratocarcinoma</tissue>
    </source>
</reference>
<reference evidence="10" key="4">
    <citation type="journal article" date="2004" name="Nature">
        <title>DNA sequence and analysis of human chromosome 9.</title>
        <authorList>
            <person name="Humphray S.J."/>
            <person name="Oliver K."/>
            <person name="Hunt A.R."/>
            <person name="Plumb R.W."/>
            <person name="Loveland J.E."/>
            <person name="Howe K.L."/>
            <person name="Andrews T.D."/>
            <person name="Searle S."/>
            <person name="Hunt S.E."/>
            <person name="Scott C.E."/>
            <person name="Jones M.C."/>
            <person name="Ainscough R."/>
            <person name="Almeida J.P."/>
            <person name="Ambrose K.D."/>
            <person name="Ashwell R.I.S."/>
            <person name="Babbage A.K."/>
            <person name="Babbage S."/>
            <person name="Bagguley C.L."/>
            <person name="Bailey J."/>
            <person name="Banerjee R."/>
            <person name="Barker D.J."/>
            <person name="Barlow K.F."/>
            <person name="Bates K."/>
            <person name="Beasley H."/>
            <person name="Beasley O."/>
            <person name="Bird C.P."/>
            <person name="Bray-Allen S."/>
            <person name="Brown A.J."/>
            <person name="Brown J.Y."/>
            <person name="Burford D."/>
            <person name="Burrill W."/>
            <person name="Burton J."/>
            <person name="Carder C."/>
            <person name="Carter N.P."/>
            <person name="Chapman J.C."/>
            <person name="Chen Y."/>
            <person name="Clarke G."/>
            <person name="Clark S.Y."/>
            <person name="Clee C.M."/>
            <person name="Clegg S."/>
            <person name="Collier R.E."/>
            <person name="Corby N."/>
            <person name="Crosier M."/>
            <person name="Cummings A.T."/>
            <person name="Davies J."/>
            <person name="Dhami P."/>
            <person name="Dunn M."/>
            <person name="Dutta I."/>
            <person name="Dyer L.W."/>
            <person name="Earthrowl M.E."/>
            <person name="Faulkner L."/>
            <person name="Fleming C.J."/>
            <person name="Frankish A."/>
            <person name="Frankland J.A."/>
            <person name="French L."/>
            <person name="Fricker D.G."/>
            <person name="Garner P."/>
            <person name="Garnett J."/>
            <person name="Ghori J."/>
            <person name="Gilbert J.G.R."/>
            <person name="Glison C."/>
            <person name="Grafham D.V."/>
            <person name="Gribble S."/>
            <person name="Griffiths C."/>
            <person name="Griffiths-Jones S."/>
            <person name="Grocock R."/>
            <person name="Guy J."/>
            <person name="Hall R.E."/>
            <person name="Hammond S."/>
            <person name="Harley J.L."/>
            <person name="Harrison E.S.I."/>
            <person name="Hart E.A."/>
            <person name="Heath P.D."/>
            <person name="Henderson C.D."/>
            <person name="Hopkins B.L."/>
            <person name="Howard P.J."/>
            <person name="Howden P.J."/>
            <person name="Huckle E."/>
            <person name="Johnson C."/>
            <person name="Johnson D."/>
            <person name="Joy A.A."/>
            <person name="Kay M."/>
            <person name="Keenan S."/>
            <person name="Kershaw J.K."/>
            <person name="Kimberley A.M."/>
            <person name="King A."/>
            <person name="Knights A."/>
            <person name="Laird G.K."/>
            <person name="Langford C."/>
            <person name="Lawlor S."/>
            <person name="Leongamornlert D.A."/>
            <person name="Leversha M."/>
            <person name="Lloyd C."/>
            <person name="Lloyd D.M."/>
            <person name="Lovell J."/>
            <person name="Martin S."/>
            <person name="Mashreghi-Mohammadi M."/>
            <person name="Matthews L."/>
            <person name="McLaren S."/>
            <person name="McLay K.E."/>
            <person name="McMurray A."/>
            <person name="Milne S."/>
            <person name="Nickerson T."/>
            <person name="Nisbett J."/>
            <person name="Nordsiek G."/>
            <person name="Pearce A.V."/>
            <person name="Peck A.I."/>
            <person name="Porter K.M."/>
            <person name="Pandian R."/>
            <person name="Pelan S."/>
            <person name="Phillimore B."/>
            <person name="Povey S."/>
            <person name="Ramsey Y."/>
            <person name="Rand V."/>
            <person name="Scharfe M."/>
            <person name="Sehra H.K."/>
            <person name="Shownkeen R."/>
            <person name="Sims S.K."/>
            <person name="Skuce C.D."/>
            <person name="Smith M."/>
            <person name="Steward C.A."/>
            <person name="Swarbreck D."/>
            <person name="Sycamore N."/>
            <person name="Tester J."/>
            <person name="Thorpe A."/>
            <person name="Tracey A."/>
            <person name="Tromans A."/>
            <person name="Thomas D.W."/>
            <person name="Wall M."/>
            <person name="Wallis J.M."/>
            <person name="West A.P."/>
            <person name="Whitehead S.L."/>
            <person name="Willey D.L."/>
            <person name="Williams S.A."/>
            <person name="Wilming L."/>
            <person name="Wray P.W."/>
            <person name="Young L."/>
            <person name="Ashurst J.L."/>
            <person name="Coulson A."/>
            <person name="Blocker H."/>
            <person name="Durbin R.M."/>
            <person name="Sulston J.E."/>
            <person name="Hubbard T."/>
            <person name="Jackson M.J."/>
            <person name="Bentley D.R."/>
            <person name="Beck S."/>
            <person name="Rogers J."/>
            <person name="Dunham I."/>
        </authorList>
    </citation>
    <scope>NUCLEOTIDE SEQUENCE [LARGE SCALE GENOMIC DNA]</scope>
</reference>
<reference evidence="10 11" key="5">
    <citation type="journal article" date="2004" name="Genome Res.">
        <title>The status, quality, and expansion of the NIH full-length cDNA project: the Mammalian Gene Collection (MGC).</title>
        <authorList>
            <consortium name="The MGC Project Team"/>
        </authorList>
    </citation>
    <scope>NUCLEOTIDE SEQUENCE [LARGE SCALE MRNA] OF 473-1167 (ISOFORMS 1/2)</scope>
    <source>
        <tissue evidence="11">Colon</tissue>
    </source>
</reference>
<reference key="6">
    <citation type="journal article" date="2006" name="Cell">
        <title>Global, in vivo, and site-specific phosphorylation dynamics in signaling networks.</title>
        <authorList>
            <person name="Olsen J.V."/>
            <person name="Blagoev B."/>
            <person name="Gnad F."/>
            <person name="Macek B."/>
            <person name="Kumar C."/>
            <person name="Mortensen P."/>
            <person name="Mann M."/>
        </authorList>
    </citation>
    <scope>PHOSPHORYLATION [LARGE SCALE ANALYSIS] AT SER-365; THR-888 AND SER-890</scope>
    <scope>IDENTIFICATION BY MASS SPECTROMETRY [LARGE SCALE ANALYSIS]</scope>
    <source>
        <tissue>Cervix carcinoma</tissue>
    </source>
</reference>
<reference key="7">
    <citation type="journal article" date="2006" name="Nucleic Acids Res.">
        <title>NOP132 is required for proper nucleolus localization of DEAD-box RNA helicase DDX47.</title>
        <authorList>
            <person name="Sekiguchi T."/>
            <person name="Hayano T."/>
            <person name="Yanagida M."/>
            <person name="Takahashi N."/>
            <person name="Nishimoto T."/>
        </authorList>
    </citation>
    <scope>FUNCTION</scope>
    <scope>INTERACTION WITH DDX18 AND DDX47</scope>
    <scope>SUBCELLULAR LOCATION</scope>
</reference>
<reference key="8">
    <citation type="journal article" date="2008" name="Mol. Cell">
        <title>Kinase-selective enrichment enables quantitative phosphoproteomics of the kinome across the cell cycle.</title>
        <authorList>
            <person name="Daub H."/>
            <person name="Olsen J.V."/>
            <person name="Bairlein M."/>
            <person name="Gnad F."/>
            <person name="Oppermann F.S."/>
            <person name="Korner R."/>
            <person name="Greff Z."/>
            <person name="Keri G."/>
            <person name="Stemmann O."/>
            <person name="Mann M."/>
        </authorList>
    </citation>
    <scope>IDENTIFICATION BY MASS SPECTROMETRY [LARGE SCALE ANALYSIS]</scope>
    <source>
        <tissue>Cervix carcinoma</tissue>
    </source>
</reference>
<reference key="9">
    <citation type="journal article" date="2008" name="Proc. Natl. Acad. Sci. U.S.A.">
        <title>A quantitative atlas of mitotic phosphorylation.</title>
        <authorList>
            <person name="Dephoure N."/>
            <person name="Zhou C."/>
            <person name="Villen J."/>
            <person name="Beausoleil S.A."/>
            <person name="Bakalarski C.E."/>
            <person name="Elledge S.J."/>
            <person name="Gygi S.P."/>
        </authorList>
    </citation>
    <scope>PHOSPHORYLATION [LARGE SCALE ANALYSIS] AT SER-365; SER-378; THR-381; SER-837; SER-838; SER-843; SER-845; SER-1036; SER-1082; SER-1083; SER-1084 AND SER-1099</scope>
    <scope>IDENTIFICATION BY MASS SPECTROMETRY [LARGE SCALE ANALYSIS]</scope>
    <source>
        <tissue>Cervix carcinoma</tissue>
    </source>
</reference>
<reference key="10">
    <citation type="journal article" date="2009" name="Anal. Chem.">
        <title>Lys-N and trypsin cover complementary parts of the phosphoproteome in a refined SCX-based approach.</title>
        <authorList>
            <person name="Gauci S."/>
            <person name="Helbig A.O."/>
            <person name="Slijper M."/>
            <person name="Krijgsveld J."/>
            <person name="Heck A.J."/>
            <person name="Mohammed S."/>
        </authorList>
    </citation>
    <scope>IDENTIFICATION BY MASS SPECTROMETRY [LARGE SCALE ANALYSIS]</scope>
</reference>
<reference key="11">
    <citation type="journal article" date="2009" name="Sci. Signal.">
        <title>Quantitative phosphoproteomic analysis of T cell receptor signaling reveals system-wide modulation of protein-protein interactions.</title>
        <authorList>
            <person name="Mayya V."/>
            <person name="Lundgren D.H."/>
            <person name="Hwang S.-I."/>
            <person name="Rezaul K."/>
            <person name="Wu L."/>
            <person name="Eng J.K."/>
            <person name="Rodionov V."/>
            <person name="Han D.K."/>
        </authorList>
    </citation>
    <scope>PHOSPHORYLATION [LARGE SCALE ANALYSIS] AT SER-298; THR-302; SER-304; SER-378; THR-381; SER-837; THR-888; SER-1082; SER-1083 AND SER-1084</scope>
    <scope>IDENTIFICATION BY MASS SPECTROMETRY [LARGE SCALE ANALYSIS]</scope>
    <source>
        <tissue>Leukemic T-cell</tissue>
    </source>
</reference>
<reference key="12">
    <citation type="journal article" date="2010" name="Sci. Signal.">
        <title>Quantitative phosphoproteomics reveals widespread full phosphorylation site occupancy during mitosis.</title>
        <authorList>
            <person name="Olsen J.V."/>
            <person name="Vermeulen M."/>
            <person name="Santamaria A."/>
            <person name="Kumar C."/>
            <person name="Miller M.L."/>
            <person name="Jensen L.J."/>
            <person name="Gnad F."/>
            <person name="Cox J."/>
            <person name="Jensen T.S."/>
            <person name="Nigg E.A."/>
            <person name="Brunak S."/>
            <person name="Mann M."/>
        </authorList>
    </citation>
    <scope>PHOSPHORYLATION [LARGE SCALE ANALYSIS] AT SER-365; THR-888 AND SER-890</scope>
    <scope>IDENTIFICATION BY MASS SPECTROMETRY [LARGE SCALE ANALYSIS]</scope>
    <source>
        <tissue>Cervix carcinoma</tissue>
    </source>
</reference>
<reference key="13">
    <citation type="journal article" date="2011" name="Sci. Signal.">
        <title>System-wide temporal characterization of the proteome and phosphoproteome of human embryonic stem cell differentiation.</title>
        <authorList>
            <person name="Rigbolt K.T."/>
            <person name="Prokhorova T.A."/>
            <person name="Akimov V."/>
            <person name="Henningsen J."/>
            <person name="Johansen P.T."/>
            <person name="Kratchmarova I."/>
            <person name="Kassem M."/>
            <person name="Mann M."/>
            <person name="Olsen J.V."/>
            <person name="Blagoev B."/>
        </authorList>
    </citation>
    <scope>PHOSPHORYLATION [LARGE SCALE ANALYSIS] AT SER-298; THR-302; SER-304; SER-365; TYR-376; SER-378; THR-381; THR-888; SER-890; SER-1082; SER-1083; SER-1084 AND SER-1099</scope>
    <scope>IDENTIFICATION BY MASS SPECTROMETRY [LARGE SCALE ANALYSIS]</scope>
</reference>
<reference key="14">
    <citation type="journal article" date="2013" name="J. Proteome Res.">
        <title>Toward a comprehensive characterization of a human cancer cell phosphoproteome.</title>
        <authorList>
            <person name="Zhou H."/>
            <person name="Di Palma S."/>
            <person name="Preisinger C."/>
            <person name="Peng M."/>
            <person name="Polat A.N."/>
            <person name="Heck A.J."/>
            <person name="Mohammed S."/>
        </authorList>
    </citation>
    <scope>PHOSPHORYLATION [LARGE SCALE ANALYSIS] AT SER-268; SER-331; SER-365; SER-378; THR-381; SER-432; SER-723; THR-888; SER-890 AND SER-1099</scope>
    <scope>IDENTIFICATION BY MASS SPECTROMETRY [LARGE SCALE ANALYSIS]</scope>
    <source>
        <tissue>Cervix carcinoma</tissue>
        <tissue>Erythroleukemia</tissue>
    </source>
</reference>
<reference key="15">
    <citation type="journal article" date="2014" name="J. Proteomics">
        <title>An enzyme assisted RP-RPLC approach for in-depth analysis of human liver phosphoproteome.</title>
        <authorList>
            <person name="Bian Y."/>
            <person name="Song C."/>
            <person name="Cheng K."/>
            <person name="Dong M."/>
            <person name="Wang F."/>
            <person name="Huang J."/>
            <person name="Sun D."/>
            <person name="Wang L."/>
            <person name="Ye M."/>
            <person name="Zou H."/>
        </authorList>
    </citation>
    <scope>PHOSPHORYLATION [LARGE SCALE ANALYSIS] AT SER-837; SER-838; SER-843 AND SER-845</scope>
    <scope>IDENTIFICATION BY MASS SPECTROMETRY [LARGE SCALE ANALYSIS]</scope>
    <source>
        <tissue>Liver</tissue>
    </source>
</reference>
<reference key="16">
    <citation type="journal article" date="2014" name="Nat. Struct. Mol. Biol.">
        <title>Uncovering global SUMOylation signaling networks in a site-specific manner.</title>
        <authorList>
            <person name="Hendriks I.A."/>
            <person name="D'Souza R.C."/>
            <person name="Yang B."/>
            <person name="Verlaan-de Vries M."/>
            <person name="Mann M."/>
            <person name="Vertegaal A.C."/>
        </authorList>
    </citation>
    <scope>SUMOYLATION [LARGE SCALE ANALYSIS] AT LYS-1057</scope>
    <scope>IDENTIFICATION BY MASS SPECTROMETRY [LARGE SCALE ANALYSIS]</scope>
</reference>
<reference key="17">
    <citation type="journal article" date="2017" name="Nat. Struct. Mol. Biol.">
        <title>Site-specific mapping of the human SUMO proteome reveals co-modification with phosphorylation.</title>
        <authorList>
            <person name="Hendriks I.A."/>
            <person name="Lyon D."/>
            <person name="Young C."/>
            <person name="Jensen L.J."/>
            <person name="Vertegaal A.C."/>
            <person name="Nielsen M.L."/>
        </authorList>
    </citation>
    <scope>SUMOYLATION [LARGE SCALE ANALYSIS] AT LYS-225; LYS-314 AND LYS-1057</scope>
    <scope>IDENTIFICATION BY MASS SPECTROMETRY [LARGE SCALE ANALYSIS]</scope>
</reference>
<comment type="function">
    <text evidence="5 6 8">Plays an essential role in the survival of diffuse-type gastric cancer cells. Acts as a nucleolar anchoring protein for DDX47. May be involved in regulation of gene expression at the post-transcriptional level or in ribosome biogenesis in cancer cells.</text>
</comment>
<comment type="subunit">
    <text evidence="5 8">Interacts with the GTP form of RRAGA, RRAGC and RRAGD. Interacts with NIP7. Interacts with DDX18; the interaction is RNA-dependent. Interacts with DDX47; the interaction is RNA-dependent.</text>
</comment>
<comment type="subcellular location">
    <subcellularLocation>
        <location evidence="6 8">Nucleus</location>
        <location evidence="6 8">Nucleolus</location>
    </subcellularLocation>
    <text>Localizes in the nucleolar-organizing region during ribosome biogenesis.</text>
</comment>
<comment type="alternative products">
    <event type="alternative splicing"/>
    <isoform>
        <id>Q76FK4-1</id>
        <name evidence="5 6">1</name>
        <sequence type="displayed"/>
    </isoform>
    <isoform>
        <id>Q76FK4-2</id>
        <name evidence="7">2</name>
        <sequence type="described" ref="VSP_052055"/>
    </isoform>
    <isoform>
        <id>Q76FK4-4</id>
        <name evidence="7">4</name>
        <sequence type="described" ref="VSP_052056"/>
    </isoform>
</comment>
<comment type="tissue specificity">
    <text evidence="6">Expressed in various diffuse-type gastric cancers. Detected at lower levels in skeletal muscle.</text>
</comment>
<comment type="induction">
    <text evidence="6">Up-regulated in diffuse-type gastric cancers.</text>
</comment>
<comment type="PTM">
    <text evidence="6">Phosphorylated.</text>
</comment>
<comment type="sequence caution" evidence="10">
    <conflict type="erroneous initiation">
        <sequence resource="EMBL-CDS" id="BAA91356"/>
    </conflict>
    <text>Truncated N-terminus.</text>
</comment>
<comment type="sequence caution" evidence="10">
    <conflict type="frameshift">
        <sequence resource="EMBL-CDS" id="BAA91356"/>
    </conflict>
</comment>
<comment type="sequence caution" evidence="10">
    <conflict type="erroneous initiation">
        <sequence resource="EMBL-CDS" id="BAB14229"/>
    </conflict>
    <text>Truncated N-terminus.</text>
</comment>
<comment type="sequence caution" evidence="10">
    <conflict type="erroneous initiation">
        <sequence resource="EMBL-CDS" id="BAB15003"/>
    </conflict>
    <text>Truncated N-terminus.</text>
</comment>
<proteinExistence type="evidence at protein level"/>
<evidence type="ECO:0000250" key="1">
    <source>
        <dbReference type="UniProtKB" id="Q3UHX0"/>
    </source>
</evidence>
<evidence type="ECO:0000255" key="2"/>
<evidence type="ECO:0000255" key="3">
    <source>
        <dbReference type="PROSITE-ProRule" id="PRU00176"/>
    </source>
</evidence>
<evidence type="ECO:0000256" key="4">
    <source>
        <dbReference type="SAM" id="MobiDB-lite"/>
    </source>
</evidence>
<evidence type="ECO:0000269" key="5">
    <source>
    </source>
</evidence>
<evidence type="ECO:0000269" key="6">
    <source>
    </source>
</evidence>
<evidence type="ECO:0000269" key="7">
    <source>
    </source>
</evidence>
<evidence type="ECO:0000269" key="8">
    <source>
    </source>
</evidence>
<evidence type="ECO:0000303" key="9">
    <source>
    </source>
</evidence>
<evidence type="ECO:0000305" key="10"/>
<evidence type="ECO:0000312" key="11">
    <source>
        <dbReference type="EMBL" id="AAH13788.2"/>
    </source>
</evidence>
<evidence type="ECO:0000312" key="12">
    <source>
        <dbReference type="EMBL" id="BAA91356.1"/>
    </source>
</evidence>
<evidence type="ECO:0000312" key="13">
    <source>
        <dbReference type="EMBL" id="BAA91479.1"/>
    </source>
</evidence>
<evidence type="ECO:0000312" key="14">
    <source>
        <dbReference type="EMBL" id="BAB14857.1"/>
    </source>
</evidence>
<evidence type="ECO:0000312" key="15">
    <source>
        <dbReference type="EMBL" id="BAB15003.1"/>
    </source>
</evidence>
<evidence type="ECO:0000312" key="16">
    <source>
        <dbReference type="EMBL" id="BAC99315.1"/>
    </source>
</evidence>
<evidence type="ECO:0000312" key="17">
    <source>
        <dbReference type="EMBL" id="BAD12268.1"/>
    </source>
</evidence>
<evidence type="ECO:0000312" key="18">
    <source>
        <dbReference type="HGNC" id="HGNC:23387"/>
    </source>
</evidence>
<evidence type="ECO:0007744" key="19">
    <source>
    </source>
</evidence>
<evidence type="ECO:0007744" key="20">
    <source>
    </source>
</evidence>
<evidence type="ECO:0007744" key="21">
    <source>
    </source>
</evidence>
<evidence type="ECO:0007744" key="22">
    <source>
    </source>
</evidence>
<evidence type="ECO:0007744" key="23">
    <source>
    </source>
</evidence>
<evidence type="ECO:0007744" key="24">
    <source>
    </source>
</evidence>
<evidence type="ECO:0007744" key="25">
    <source>
    </source>
</evidence>
<evidence type="ECO:0007744" key="26">
    <source>
    </source>
</evidence>
<evidence type="ECO:0007744" key="27">
    <source>
    </source>
</evidence>
<protein>
    <recommendedName>
        <fullName>Nucleolar protein 8</fullName>
    </recommendedName>
    <alternativeName>
        <fullName>Nucleolar protein Nop132</fullName>
    </alternativeName>
</protein>
<accession>Q76FK4</accession>
<accession>Q5TCC7</accession>
<accession>Q5TCC8</accession>
<accession>Q5TCD3</accession>
<accession>Q5TCD5</accession>
<accession>Q5TCD6</accession>
<accession>Q5TCD7</accession>
<accession>Q76D35</accession>
<accession>Q7L3E2</accession>
<accession>Q9H586</accession>
<accession>Q9H795</accession>
<accession>Q9H7W7</accession>
<accession>Q9H9J6</accession>
<accession>Q9NWA4</accession>
<accession>Q9NWM4</accession>
<keyword id="KW-0025">Alternative splicing</keyword>
<keyword id="KW-0175">Coiled coil</keyword>
<keyword id="KW-0903">Direct protein sequencing</keyword>
<keyword id="KW-1017">Isopeptide bond</keyword>
<keyword id="KW-0539">Nucleus</keyword>
<keyword id="KW-0597">Phosphoprotein</keyword>
<keyword id="KW-1267">Proteomics identification</keyword>
<keyword id="KW-1185">Reference proteome</keyword>
<keyword id="KW-0694">RNA-binding</keyword>
<keyword id="KW-0698">rRNA processing</keyword>
<keyword id="KW-0832">Ubl conjugation</keyword>
<sequence>MKVNRETKRLYVGGLSQDISEADLQNQFSRFGEVSDVEIITRKDDQGNPQKVFAYINISVAEADLKKCMSVLNKTKWKGGTLQIQLAKESFLHRLAQEREAAKAKKEESTTGNANLLEKTGGVDFHMKAVPGTEVPGHKNWVVSKFGRVLPVLHLKNQHKRKIIKYDPSKYCHNLKKIGEDFSNTIPISSLTWELEGGNDPMSKKRRGEFSDFHGPPKKIIKVQKDESSTGSLAMSTRPRRVIERPPLTQQQAAQKRTCDSITPSKSSPVPVSDTQKLKNLPFKTSGLETAKKRNSISDDDTDSEDELRMMIAKEENLQRTTQPSINESESDPFEVVRDDFKSGVHKLHSLIGLGIKNRVSCHDSDDDIMRNDREYDSGDTDEIIAMKKNVAKVKNSTEFSQMEKSTKKTSFKNRENCELSDHCIKLQKRKSNVESALSHGLKSLNRKSPSHSSSSEDADSASELADSEGGEEYNAMMKNCLRVNLTLADLEQLAGSDLKVPNEDTKSDGPETTTQCKFDRGSKSPKTPTGLRRGRQCIRPAEIVASLLEGEENTCGKQKPKENNLKPKFQAFKGVGCLYEKESMKKSLKDSVASNNKDQNSMKHEDPSIISMEDGSPYVNGSLGEVTPCQHAKKANGPNYIQPQKRQTTFESQDRKAVSPSSSEKRSKNPISRPLEGKKSLSLSAKTHNIGFDKDSCHSTTKTEASQEERSDSSGLTSLKKSPKVSSKDTREIKTDFSLSISNSSDVSAKDKHAEDNEKRLAALEARQKAKEVQKKLVHNALANLDGHPEDKPTHIIFGSDSECETEETSTQEQSHPGEEWVKESMGKTSGKLFDSSDDDESDSEDDSNRFKIKPQFEGRAGQKLMDLQSHFGTDDRFRMDSRFLETDSEEEQEEVNEKKTAEEEELAEEKKKALNVVQSVLQINLSNSTNRGSVAAKKFKDIIHYDPTKQDHATYERKRDDKPKESKAKRKKKREEAEKLPEVSKEMYYNIAMDLKEIFQTTKYTSEKEEGTPWNEDCGKEKPEEIQDPAALTSDAEQPSGFTFSFFDSDTKDIKEETYRVETVKPGKIVWQEDPRLQDSSSEEEDVTEETDHRNSSPGEASLLEKETTRFFFFSKNDERLQGSDLFWRGVGSNMSRNSWEARTTNLRMDCRKKHKDAKRKMKPK</sequence>
<organism>
    <name type="scientific">Homo sapiens</name>
    <name type="common">Human</name>
    <dbReference type="NCBI Taxonomy" id="9606"/>
    <lineage>
        <taxon>Eukaryota</taxon>
        <taxon>Metazoa</taxon>
        <taxon>Chordata</taxon>
        <taxon>Craniata</taxon>
        <taxon>Vertebrata</taxon>
        <taxon>Euteleostomi</taxon>
        <taxon>Mammalia</taxon>
        <taxon>Eutheria</taxon>
        <taxon>Euarchontoglires</taxon>
        <taxon>Primates</taxon>
        <taxon>Haplorrhini</taxon>
        <taxon>Catarrhini</taxon>
        <taxon>Hominidae</taxon>
        <taxon>Homo</taxon>
    </lineage>
</organism>
<gene>
    <name evidence="18" type="primary">NOL8</name>
    <name type="synonym">C9orf34</name>
    <name type="synonym">NOP132</name>
</gene>